<reference key="1">
    <citation type="journal article" date="2003" name="Nat. Genet.">
        <title>Comparative analysis of the genome sequences of Bordetella pertussis, Bordetella parapertussis and Bordetella bronchiseptica.</title>
        <authorList>
            <person name="Parkhill J."/>
            <person name="Sebaihia M."/>
            <person name="Preston A."/>
            <person name="Murphy L.D."/>
            <person name="Thomson N.R."/>
            <person name="Harris D.E."/>
            <person name="Holden M.T.G."/>
            <person name="Churcher C.M."/>
            <person name="Bentley S.D."/>
            <person name="Mungall K.L."/>
            <person name="Cerdeno-Tarraga A.-M."/>
            <person name="Temple L."/>
            <person name="James K.D."/>
            <person name="Harris B."/>
            <person name="Quail M.A."/>
            <person name="Achtman M."/>
            <person name="Atkin R."/>
            <person name="Baker S."/>
            <person name="Basham D."/>
            <person name="Bason N."/>
            <person name="Cherevach I."/>
            <person name="Chillingworth T."/>
            <person name="Collins M."/>
            <person name="Cronin A."/>
            <person name="Davis P."/>
            <person name="Doggett J."/>
            <person name="Feltwell T."/>
            <person name="Goble A."/>
            <person name="Hamlin N."/>
            <person name="Hauser H."/>
            <person name="Holroyd S."/>
            <person name="Jagels K."/>
            <person name="Leather S."/>
            <person name="Moule S."/>
            <person name="Norberczak H."/>
            <person name="O'Neil S."/>
            <person name="Ormond D."/>
            <person name="Price C."/>
            <person name="Rabbinowitsch E."/>
            <person name="Rutter S."/>
            <person name="Sanders M."/>
            <person name="Saunders D."/>
            <person name="Seeger K."/>
            <person name="Sharp S."/>
            <person name="Simmonds M."/>
            <person name="Skelton J."/>
            <person name="Squares R."/>
            <person name="Squares S."/>
            <person name="Stevens K."/>
            <person name="Unwin L."/>
            <person name="Whitehead S."/>
            <person name="Barrell B.G."/>
            <person name="Maskell D.J."/>
        </authorList>
    </citation>
    <scope>NUCLEOTIDE SEQUENCE [LARGE SCALE GENOMIC DNA]</scope>
    <source>
        <strain>ATCC BAA-588 / NCTC 13252 / RB50</strain>
    </source>
</reference>
<gene>
    <name evidence="2" type="primary">mdh</name>
    <name type="ordered locus">BB3684</name>
</gene>
<comment type="function">
    <text evidence="2">Catalyzes the reversible oxidation of malate to oxaloacetate.</text>
</comment>
<comment type="catalytic activity">
    <reaction evidence="2">
        <text>(S)-malate + NAD(+) = oxaloacetate + NADH + H(+)</text>
        <dbReference type="Rhea" id="RHEA:21432"/>
        <dbReference type="ChEBI" id="CHEBI:15378"/>
        <dbReference type="ChEBI" id="CHEBI:15589"/>
        <dbReference type="ChEBI" id="CHEBI:16452"/>
        <dbReference type="ChEBI" id="CHEBI:57540"/>
        <dbReference type="ChEBI" id="CHEBI:57945"/>
        <dbReference type="EC" id="1.1.1.37"/>
    </reaction>
</comment>
<comment type="similarity">
    <text evidence="2">Belongs to the LDH/MDH superfamily. MDH type 2 family.</text>
</comment>
<dbReference type="EC" id="1.1.1.37" evidence="2"/>
<dbReference type="EMBL" id="BX640448">
    <property type="protein sequence ID" value="CAE35657.1"/>
    <property type="molecule type" value="Genomic_DNA"/>
</dbReference>
<dbReference type="RefSeq" id="WP_003813657.1">
    <property type="nucleotide sequence ID" value="NC_002927.3"/>
</dbReference>
<dbReference type="SMR" id="Q7WD94"/>
<dbReference type="KEGG" id="bbr:BB3684"/>
<dbReference type="eggNOG" id="COG0039">
    <property type="taxonomic scope" value="Bacteria"/>
</dbReference>
<dbReference type="HOGENOM" id="CLU_040727_2_0_4"/>
<dbReference type="Proteomes" id="UP000001027">
    <property type="component" value="Chromosome"/>
</dbReference>
<dbReference type="GO" id="GO:0030060">
    <property type="term" value="F:L-malate dehydrogenase (NAD+) activity"/>
    <property type="evidence" value="ECO:0007669"/>
    <property type="project" value="UniProtKB-UniRule"/>
</dbReference>
<dbReference type="GO" id="GO:0006108">
    <property type="term" value="P:malate metabolic process"/>
    <property type="evidence" value="ECO:0007669"/>
    <property type="project" value="InterPro"/>
</dbReference>
<dbReference type="GO" id="GO:0006099">
    <property type="term" value="P:tricarboxylic acid cycle"/>
    <property type="evidence" value="ECO:0007669"/>
    <property type="project" value="UniProtKB-UniRule"/>
</dbReference>
<dbReference type="CDD" id="cd01338">
    <property type="entry name" value="MDH_chloroplast-like"/>
    <property type="match status" value="1"/>
</dbReference>
<dbReference type="FunFam" id="3.40.50.720:FF:000010">
    <property type="entry name" value="Malate dehydrogenase"/>
    <property type="match status" value="1"/>
</dbReference>
<dbReference type="FunFam" id="3.90.110.10:FF:000002">
    <property type="entry name" value="Malate dehydrogenase"/>
    <property type="match status" value="1"/>
</dbReference>
<dbReference type="Gene3D" id="3.90.110.10">
    <property type="entry name" value="Lactate dehydrogenase/glycoside hydrolase, family 4, C-terminal"/>
    <property type="match status" value="1"/>
</dbReference>
<dbReference type="Gene3D" id="3.40.50.720">
    <property type="entry name" value="NAD(P)-binding Rossmann-like Domain"/>
    <property type="match status" value="1"/>
</dbReference>
<dbReference type="HAMAP" id="MF_01517">
    <property type="entry name" value="Malate_dehydrog_2"/>
    <property type="match status" value="1"/>
</dbReference>
<dbReference type="InterPro" id="IPR001557">
    <property type="entry name" value="L-lactate/malate_DH"/>
</dbReference>
<dbReference type="InterPro" id="IPR022383">
    <property type="entry name" value="Lactate/malate_DH_C"/>
</dbReference>
<dbReference type="InterPro" id="IPR001236">
    <property type="entry name" value="Lactate/malate_DH_N"/>
</dbReference>
<dbReference type="InterPro" id="IPR015955">
    <property type="entry name" value="Lactate_DH/Glyco_Ohase_4_C"/>
</dbReference>
<dbReference type="InterPro" id="IPR010945">
    <property type="entry name" value="Malate_DH_type2"/>
</dbReference>
<dbReference type="InterPro" id="IPR036291">
    <property type="entry name" value="NAD(P)-bd_dom_sf"/>
</dbReference>
<dbReference type="NCBIfam" id="TIGR01759">
    <property type="entry name" value="MalateDH-SF1"/>
    <property type="match status" value="1"/>
</dbReference>
<dbReference type="NCBIfam" id="NF003916">
    <property type="entry name" value="PRK05442.1"/>
    <property type="match status" value="1"/>
</dbReference>
<dbReference type="PANTHER" id="PTHR23382">
    <property type="entry name" value="MALATE DEHYDROGENASE"/>
    <property type="match status" value="1"/>
</dbReference>
<dbReference type="Pfam" id="PF02866">
    <property type="entry name" value="Ldh_1_C"/>
    <property type="match status" value="1"/>
</dbReference>
<dbReference type="Pfam" id="PF00056">
    <property type="entry name" value="Ldh_1_N"/>
    <property type="match status" value="1"/>
</dbReference>
<dbReference type="PIRSF" id="PIRSF000102">
    <property type="entry name" value="Lac_mal_DH"/>
    <property type="match status" value="1"/>
</dbReference>
<dbReference type="SUPFAM" id="SSF56327">
    <property type="entry name" value="LDH C-terminal domain-like"/>
    <property type="match status" value="1"/>
</dbReference>
<dbReference type="SUPFAM" id="SSF51735">
    <property type="entry name" value="NAD(P)-binding Rossmann-fold domains"/>
    <property type="match status" value="1"/>
</dbReference>
<accession>Q7WD94</accession>
<organism>
    <name type="scientific">Bordetella bronchiseptica (strain ATCC BAA-588 / NCTC 13252 / RB50)</name>
    <name type="common">Alcaligenes bronchisepticus</name>
    <dbReference type="NCBI Taxonomy" id="257310"/>
    <lineage>
        <taxon>Bacteria</taxon>
        <taxon>Pseudomonadati</taxon>
        <taxon>Pseudomonadota</taxon>
        <taxon>Betaproteobacteria</taxon>
        <taxon>Burkholderiales</taxon>
        <taxon>Alcaligenaceae</taxon>
        <taxon>Bordetella</taxon>
    </lineage>
</organism>
<sequence>MSKPALRVAVTGAAGQIGYALLFRIASGEMLGKDQPVILQLLEIPDEKAQKALKGVIMELEDCAFPLLHEVTAHSDPRTAFKDADVALLVGARPRGPGMERKDLLSVNAQIFTAQGRALNDVASRNVKVLVVGNPANTNAYIAMKSAPDLPAKNFTAMLRLDHNRALSQLSAKSGKRVADIEKLIVWGNHSPTMYPDFRFATVGGQGLTQLINDDAWNRDTFIPTVGKRGAAIIEARGLSSAASAANAAIDHVRDWVLGSNGKWVTMGIPSDGSYGIPEGIIYGFPVVTENGEYKMIKDLEIDAFSRERLDFTLKELLEERDGVKDLLK</sequence>
<keyword id="KW-0520">NAD</keyword>
<keyword id="KW-0560">Oxidoreductase</keyword>
<keyword id="KW-0816">Tricarboxylic acid cycle</keyword>
<name>MDH_BORBR</name>
<evidence type="ECO:0000250" key="1"/>
<evidence type="ECO:0000255" key="2">
    <source>
        <dbReference type="HAMAP-Rule" id="MF_01517"/>
    </source>
</evidence>
<feature type="initiator methionine" description="Removed" evidence="1">
    <location>
        <position position="1"/>
    </location>
</feature>
<feature type="chain" id="PRO_0000113349" description="Malate dehydrogenase">
    <location>
        <begin position="2"/>
        <end position="329"/>
    </location>
</feature>
<feature type="active site" description="Proton acceptor" evidence="2">
    <location>
        <position position="190"/>
    </location>
</feature>
<feature type="binding site" evidence="2">
    <location>
        <begin position="12"/>
        <end position="18"/>
    </location>
    <ligand>
        <name>NAD(+)</name>
        <dbReference type="ChEBI" id="CHEBI:57540"/>
    </ligand>
</feature>
<feature type="binding site" evidence="2">
    <location>
        <position position="95"/>
    </location>
    <ligand>
        <name>substrate</name>
    </ligand>
</feature>
<feature type="binding site" evidence="2">
    <location>
        <position position="101"/>
    </location>
    <ligand>
        <name>substrate</name>
    </ligand>
</feature>
<feature type="binding site" evidence="2">
    <location>
        <position position="108"/>
    </location>
    <ligand>
        <name>NAD(+)</name>
        <dbReference type="ChEBI" id="CHEBI:57540"/>
    </ligand>
</feature>
<feature type="binding site" evidence="2">
    <location>
        <position position="115"/>
    </location>
    <ligand>
        <name>NAD(+)</name>
        <dbReference type="ChEBI" id="CHEBI:57540"/>
    </ligand>
</feature>
<feature type="binding site" evidence="2">
    <location>
        <begin position="132"/>
        <end position="134"/>
    </location>
    <ligand>
        <name>NAD(+)</name>
        <dbReference type="ChEBI" id="CHEBI:57540"/>
    </ligand>
</feature>
<feature type="binding site" evidence="2">
    <location>
        <position position="134"/>
    </location>
    <ligand>
        <name>substrate</name>
    </ligand>
</feature>
<feature type="binding site" evidence="2">
    <location>
        <position position="165"/>
    </location>
    <ligand>
        <name>substrate</name>
    </ligand>
</feature>
<proteinExistence type="inferred from homology"/>
<protein>
    <recommendedName>
        <fullName evidence="2">Malate dehydrogenase</fullName>
        <ecNumber evidence="2">1.1.1.37</ecNumber>
    </recommendedName>
</protein>